<comment type="function">
    <text evidence="2">Component of intercellular desmosome junctions (By similarity). Involved in the interaction of plaque proteins and intermediate filaments mediating cell-cell adhesion (By similarity).</text>
</comment>
<comment type="subunit">
    <text evidence="2">Binds to JUP/plakoglobin (By similarity). Interacts with PKP2 (By similarity). Interacts with DSC3; there is evidence to suggest that the interaction promotes cell-cell adhesion of keratinocytes (By similarity).</text>
</comment>
<comment type="subcellular location">
    <subcellularLocation>
        <location evidence="3">Cell membrane</location>
        <topology evidence="3">Single-pass type I membrane protein</topology>
    </subcellularLocation>
    <subcellularLocation>
        <location evidence="3">Cell junction</location>
        <location evidence="3">Desmosome</location>
    </subcellularLocation>
    <subcellularLocation>
        <location evidence="2">Cytoplasm</location>
    </subcellularLocation>
    <subcellularLocation>
        <location evidence="2">Nucleus</location>
    </subcellularLocation>
</comment>
<comment type="domain">
    <text evidence="1">Three calcium ions are usually bound at the interface of each cadherin domain and rigidify the connections, imparting a strong curvature to the full-length ectodomain.</text>
</comment>
<dbReference type="EMBL" id="AY677210">
    <property type="protein sequence ID" value="AAV84914.1"/>
    <property type="molecule type" value="mRNA"/>
</dbReference>
<dbReference type="RefSeq" id="NP_001030612.1">
    <property type="nucleotide sequence ID" value="NM_001035535.1"/>
</dbReference>
<dbReference type="SMR" id="Q3BDI7"/>
<dbReference type="FunCoup" id="Q3BDI7">
    <property type="interactions" value="124"/>
</dbReference>
<dbReference type="STRING" id="9823.ENSSSCP00000020931"/>
<dbReference type="GlyCosmos" id="Q3BDI7">
    <property type="glycosylation" value="3 sites, No reported glycans"/>
</dbReference>
<dbReference type="GlyGen" id="Q3BDI7">
    <property type="glycosylation" value="5 sites"/>
</dbReference>
<dbReference type="PaxDb" id="9823-ENSSSCP00000020931"/>
<dbReference type="PeptideAtlas" id="Q3BDI7"/>
<dbReference type="Ensembl" id="ENSSSCT00065068099.1">
    <property type="protein sequence ID" value="ENSSSCP00065029652.1"/>
    <property type="gene ID" value="ENSSSCG00065049721.1"/>
</dbReference>
<dbReference type="GeneID" id="641355"/>
<dbReference type="KEGG" id="ssc:641355"/>
<dbReference type="CTD" id="1828"/>
<dbReference type="eggNOG" id="KOG3594">
    <property type="taxonomic scope" value="Eukaryota"/>
</dbReference>
<dbReference type="InParanoid" id="Q3BDI7"/>
<dbReference type="OrthoDB" id="8961010at2759"/>
<dbReference type="Reactome" id="R-SSC-351906">
    <property type="pathway name" value="Apoptotic cleavage of cell adhesion proteins"/>
</dbReference>
<dbReference type="Reactome" id="R-SSC-6798695">
    <property type="pathway name" value="Neutrophil degranulation"/>
</dbReference>
<dbReference type="Reactome" id="R-SSC-6805567">
    <property type="pathway name" value="Keratinization"/>
</dbReference>
<dbReference type="Reactome" id="R-SSC-6809371">
    <property type="pathway name" value="Formation of the cornified envelope"/>
</dbReference>
<dbReference type="Reactome" id="R-SSC-9696264">
    <property type="pathway name" value="RND3 GTPase cycle"/>
</dbReference>
<dbReference type="Reactome" id="R-SSC-9696270">
    <property type="pathway name" value="RND2 GTPase cycle"/>
</dbReference>
<dbReference type="Proteomes" id="UP000008227">
    <property type="component" value="Unplaced"/>
</dbReference>
<dbReference type="Proteomes" id="UP000314985">
    <property type="component" value="Unplaced"/>
</dbReference>
<dbReference type="Proteomes" id="UP000694570">
    <property type="component" value="Unplaced"/>
</dbReference>
<dbReference type="Proteomes" id="UP000694571">
    <property type="component" value="Unplaced"/>
</dbReference>
<dbReference type="Proteomes" id="UP000694720">
    <property type="component" value="Unplaced"/>
</dbReference>
<dbReference type="Proteomes" id="UP000694722">
    <property type="component" value="Unplaced"/>
</dbReference>
<dbReference type="Proteomes" id="UP000694723">
    <property type="component" value="Unplaced"/>
</dbReference>
<dbReference type="Proteomes" id="UP000694724">
    <property type="component" value="Unplaced"/>
</dbReference>
<dbReference type="Proteomes" id="UP000694725">
    <property type="component" value="Unplaced"/>
</dbReference>
<dbReference type="Proteomes" id="UP000694726">
    <property type="component" value="Unplaced"/>
</dbReference>
<dbReference type="Proteomes" id="UP000694727">
    <property type="component" value="Unplaced"/>
</dbReference>
<dbReference type="Proteomes" id="UP000694728">
    <property type="component" value="Unplaced"/>
</dbReference>
<dbReference type="GO" id="GO:0005737">
    <property type="term" value="C:cytoplasm"/>
    <property type="evidence" value="ECO:0007669"/>
    <property type="project" value="UniProtKB-SubCell"/>
</dbReference>
<dbReference type="GO" id="GO:0030057">
    <property type="term" value="C:desmosome"/>
    <property type="evidence" value="ECO:0000318"/>
    <property type="project" value="GO_Central"/>
</dbReference>
<dbReference type="GO" id="GO:0005634">
    <property type="term" value="C:nucleus"/>
    <property type="evidence" value="ECO:0007669"/>
    <property type="project" value="UniProtKB-SubCell"/>
</dbReference>
<dbReference type="GO" id="GO:0005886">
    <property type="term" value="C:plasma membrane"/>
    <property type="evidence" value="ECO:0007669"/>
    <property type="project" value="UniProtKB-SubCell"/>
</dbReference>
<dbReference type="GO" id="GO:0005509">
    <property type="term" value="F:calcium ion binding"/>
    <property type="evidence" value="ECO:0000318"/>
    <property type="project" value="GO_Central"/>
</dbReference>
<dbReference type="GO" id="GO:0045295">
    <property type="term" value="F:gamma-catenin binding"/>
    <property type="evidence" value="ECO:0000318"/>
    <property type="project" value="GO_Central"/>
</dbReference>
<dbReference type="GO" id="GO:0098609">
    <property type="term" value="P:cell-cell adhesion"/>
    <property type="evidence" value="ECO:0000318"/>
    <property type="project" value="GO_Central"/>
</dbReference>
<dbReference type="GO" id="GO:0007156">
    <property type="term" value="P:homophilic cell adhesion via plasma membrane adhesion molecules"/>
    <property type="evidence" value="ECO:0007669"/>
    <property type="project" value="InterPro"/>
</dbReference>
<dbReference type="CDD" id="cd11304">
    <property type="entry name" value="Cadherin_repeat"/>
    <property type="match status" value="4"/>
</dbReference>
<dbReference type="FunFam" id="2.60.40.60:FF:000011">
    <property type="entry name" value="Cadherin 1"/>
    <property type="match status" value="1"/>
</dbReference>
<dbReference type="FunFam" id="2.60.40.60:FF:000068">
    <property type="entry name" value="Desmoglein 1"/>
    <property type="match status" value="1"/>
</dbReference>
<dbReference type="FunFam" id="2.60.40.60:FF:000083">
    <property type="entry name" value="Desmoglein 1"/>
    <property type="match status" value="1"/>
</dbReference>
<dbReference type="FunFam" id="2.60.40.60:FF:000238">
    <property type="entry name" value="Desmoglein 1"/>
    <property type="match status" value="1"/>
</dbReference>
<dbReference type="FunFam" id="4.10.900.10:FF:000003">
    <property type="entry name" value="Desmoglein 1"/>
    <property type="match status" value="1"/>
</dbReference>
<dbReference type="Gene3D" id="2.60.40.60">
    <property type="entry name" value="Cadherins"/>
    <property type="match status" value="4"/>
</dbReference>
<dbReference type="Gene3D" id="4.10.900.10">
    <property type="entry name" value="TCF3-CBD (Catenin binding domain)"/>
    <property type="match status" value="1"/>
</dbReference>
<dbReference type="InterPro" id="IPR050971">
    <property type="entry name" value="Cadherin-domain_protein"/>
</dbReference>
<dbReference type="InterPro" id="IPR002126">
    <property type="entry name" value="Cadherin-like_dom"/>
</dbReference>
<dbReference type="InterPro" id="IPR015919">
    <property type="entry name" value="Cadherin-like_sf"/>
</dbReference>
<dbReference type="InterPro" id="IPR020894">
    <property type="entry name" value="Cadherin_CS"/>
</dbReference>
<dbReference type="InterPro" id="IPR000233">
    <property type="entry name" value="Cadherin_Y-type_LIR"/>
</dbReference>
<dbReference type="InterPro" id="IPR027397">
    <property type="entry name" value="Catenin-bd_sf"/>
</dbReference>
<dbReference type="InterPro" id="IPR009122">
    <property type="entry name" value="Desmosomal_cadherin"/>
</dbReference>
<dbReference type="PANTHER" id="PTHR24025">
    <property type="entry name" value="DESMOGLEIN FAMILY MEMBER"/>
    <property type="match status" value="1"/>
</dbReference>
<dbReference type="PANTHER" id="PTHR24025:SF9">
    <property type="entry name" value="DESMOGLEIN-1"/>
    <property type="match status" value="1"/>
</dbReference>
<dbReference type="Pfam" id="PF01049">
    <property type="entry name" value="CADH_Y-type_LIR"/>
    <property type="match status" value="1"/>
</dbReference>
<dbReference type="Pfam" id="PF00028">
    <property type="entry name" value="Cadherin"/>
    <property type="match status" value="3"/>
</dbReference>
<dbReference type="PRINTS" id="PR00205">
    <property type="entry name" value="CADHERIN"/>
</dbReference>
<dbReference type="PRINTS" id="PR01818">
    <property type="entry name" value="DESMOCADHERN"/>
</dbReference>
<dbReference type="PRINTS" id="PR01819">
    <property type="entry name" value="DESMOGLEIN"/>
</dbReference>
<dbReference type="SMART" id="SM00112">
    <property type="entry name" value="CA"/>
    <property type="match status" value="4"/>
</dbReference>
<dbReference type="SUPFAM" id="SSF49313">
    <property type="entry name" value="Cadherin-like"/>
    <property type="match status" value="4"/>
</dbReference>
<dbReference type="PROSITE" id="PS00232">
    <property type="entry name" value="CADHERIN_1"/>
    <property type="match status" value="2"/>
</dbReference>
<dbReference type="PROSITE" id="PS50268">
    <property type="entry name" value="CADHERIN_2"/>
    <property type="match status" value="4"/>
</dbReference>
<evidence type="ECO:0000250" key="1"/>
<evidence type="ECO:0000250" key="2">
    <source>
        <dbReference type="UniProtKB" id="Q02413"/>
    </source>
</evidence>
<evidence type="ECO:0000250" key="3">
    <source>
        <dbReference type="UniProtKB" id="Q7TSF1"/>
    </source>
</evidence>
<evidence type="ECO:0000255" key="4"/>
<evidence type="ECO:0000255" key="5">
    <source>
        <dbReference type="PROSITE-ProRule" id="PRU00043"/>
    </source>
</evidence>
<evidence type="ECO:0000256" key="6">
    <source>
        <dbReference type="SAM" id="MobiDB-lite"/>
    </source>
</evidence>
<reference key="1">
    <citation type="journal article" date="2005" name="Vet. Dermatol.">
        <title>Cloning of swine desmoglein 1 and its direct proteolysis by Staphylococcus hyicus exfoliative toxins isolated from pigs with exudative epidermitis.</title>
        <authorList>
            <person name="Nishifuji K."/>
            <person name="Fudaba Y."/>
            <person name="Yamaguchi T."/>
            <person name="Iwasaki T."/>
            <person name="Sugai M."/>
            <person name="Amagai M."/>
        </authorList>
    </citation>
    <scope>NUCLEOTIDE SEQUENCE [MRNA]</scope>
    <source>
        <tissue>Skin</tissue>
    </source>
</reference>
<feature type="signal peptide" evidence="4">
    <location>
        <begin position="1"/>
        <end position="23"/>
    </location>
</feature>
<feature type="propeptide" id="PRO_0000289664" evidence="4">
    <location>
        <begin position="24"/>
        <end position="49"/>
    </location>
</feature>
<feature type="chain" id="PRO_0000289665" description="Desmoglein-1">
    <location>
        <begin position="50"/>
        <end position="1045"/>
    </location>
</feature>
<feature type="topological domain" description="Extracellular" evidence="4">
    <location>
        <begin position="50"/>
        <end position="546"/>
    </location>
</feature>
<feature type="transmembrane region" description="Helical" evidence="4">
    <location>
        <begin position="547"/>
        <end position="567"/>
    </location>
</feature>
<feature type="topological domain" description="Cytoplasmic" evidence="4">
    <location>
        <begin position="568"/>
        <end position="1045"/>
    </location>
</feature>
<feature type="domain" description="Cadherin 1" evidence="5">
    <location>
        <begin position="50"/>
        <end position="158"/>
    </location>
</feature>
<feature type="domain" description="Cadherin 2" evidence="5">
    <location>
        <begin position="159"/>
        <end position="270"/>
    </location>
</feature>
<feature type="domain" description="Cadherin 3" evidence="5">
    <location>
        <begin position="271"/>
        <end position="385"/>
    </location>
</feature>
<feature type="domain" description="Cadherin 4" evidence="5">
    <location>
        <begin position="386"/>
        <end position="496"/>
    </location>
</feature>
<feature type="repeat" description="Desmoglein repeat 1">
    <location>
        <begin position="814"/>
        <end position="840"/>
    </location>
</feature>
<feature type="repeat" description="Desmoglein repeat 2">
    <location>
        <begin position="841"/>
        <end position="870"/>
    </location>
</feature>
<feature type="repeat" description="Desmoglein repeat 3">
    <location>
        <begin position="871"/>
        <end position="900"/>
    </location>
</feature>
<feature type="repeat" description="Desmoglein repeat 4">
    <location>
        <begin position="901"/>
        <end position="928"/>
    </location>
</feature>
<feature type="repeat" description="Desmoglein repeat 5">
    <location>
        <begin position="929"/>
        <end position="957"/>
    </location>
</feature>
<feature type="region of interest" description="Disordered" evidence="6">
    <location>
        <begin position="1019"/>
        <end position="1045"/>
    </location>
</feature>
<feature type="compositionally biased region" description="Polar residues" evidence="6">
    <location>
        <begin position="1020"/>
        <end position="1045"/>
    </location>
</feature>
<feature type="glycosylation site" description="N-linked (GlcNAc...) asparagine" evidence="4">
    <location>
        <position position="36"/>
    </location>
</feature>
<feature type="glycosylation site" description="N-linked (GlcNAc...) asparagine" evidence="4">
    <location>
        <position position="110"/>
    </location>
</feature>
<feature type="glycosylation site" description="N-linked (GlcNAc...) asparagine" evidence="4">
    <location>
        <position position="180"/>
    </location>
</feature>
<accession>Q3BDI7</accession>
<sequence>MNWPFFRTAAVLFIFLVVLEVNSEFRIQVRDYNTKNGTIKWHSIRRQKREWIKFAAACREGEDNSKRNPIAKIHSDCAANQQVTYRISGVGIDQPPYGIFVINQKTGEINITSIVDREVTPFFIIYCRALNAQGQDLERPLELRVRVLDINDNPPVFSMSTFLGQIEENSNANTLVMRLNATDADEPNNLNSKIAFKIIRQEPSDSPMFIINRYTGEIRTMNNFLDREQYSQYSLAVRGSDRDGGADGMSAECECSIKILDVNDNIPYMELPSNSLQIEENSLNSNLLQIRVIDLDEEFSANWLAVIFFISGNEGGWFDIEMNERTNVGTLKIVKPLDYEEVKNLQLSLGVRNKAEFHQSIMSQYKLTATAISVTVLNVIEGSVFRPGSKTYVVTSSMGQNYKLGEFIATDLDTGLPSTTVRYVMGNNPTDLLAIDSKTGIITLRNKVTREQYNLLGKKYQGTILSIDDALQRTCTGTINIDLEGSGWEDRQTDGAVTGGGTITSTNDFTPSYEYTTTNTEDVYSVTPTGNGVRVRHPLDNVHFGPAGIGLLIMGFLVLGLVPFLLMYCDCGGAPGGGAGFEPVPECSDGAIHSWAVEGAQPERADLTTICVPQVPPDNANIIECIDNSGVYTNEYCGREMQELGGGERTTGFELIDGGKISGAPEICQEHSGTLRRNSMRECREGGLNMNFMESYFCQKAYAYADEDEGRPSNDCLLIYDIEGEGSPAGSVGCCSFIGEDLDDSFLDTLGPKFKKLADISLGKETEPYPDPDPSWPPQSTDPICPPQGTEPIGSGHPPISPHIGTTTVISESTYPSGPGVHHPMPIPDPLSYGNVTMTESYTTSGILKPSVHVHDNRQASNVVVTERVVGPISGANLHGMLEMPDLRDGSNVIVTERVIAPNSSLPTTLTIPDPRESSNVVVTERVIRPTSGIVGNLSMHPDISNTHNVIVTERVVSGSGITGISGGSGMGSSGLVGSTAGVGGDGLGLSSLGGGGLSSGIGGTATIGHLRGSSEHHFSNTLGSASPTTTRSRITKYSTVQYTK</sequence>
<organism>
    <name type="scientific">Sus scrofa</name>
    <name type="common">Pig</name>
    <dbReference type="NCBI Taxonomy" id="9823"/>
    <lineage>
        <taxon>Eukaryota</taxon>
        <taxon>Metazoa</taxon>
        <taxon>Chordata</taxon>
        <taxon>Craniata</taxon>
        <taxon>Vertebrata</taxon>
        <taxon>Euteleostomi</taxon>
        <taxon>Mammalia</taxon>
        <taxon>Eutheria</taxon>
        <taxon>Laurasiatheria</taxon>
        <taxon>Artiodactyla</taxon>
        <taxon>Suina</taxon>
        <taxon>Suidae</taxon>
        <taxon>Sus</taxon>
    </lineage>
</organism>
<gene>
    <name type="primary">DSG1</name>
</gene>
<proteinExistence type="evidence at transcript level"/>
<keyword id="KW-0106">Calcium</keyword>
<keyword id="KW-0130">Cell adhesion</keyword>
<keyword id="KW-0965">Cell junction</keyword>
<keyword id="KW-1003">Cell membrane</keyword>
<keyword id="KW-0165">Cleavage on pair of basic residues</keyword>
<keyword id="KW-0963">Cytoplasm</keyword>
<keyword id="KW-0325">Glycoprotein</keyword>
<keyword id="KW-0472">Membrane</keyword>
<keyword id="KW-0479">Metal-binding</keyword>
<keyword id="KW-0539">Nucleus</keyword>
<keyword id="KW-1185">Reference proteome</keyword>
<keyword id="KW-0677">Repeat</keyword>
<keyword id="KW-0732">Signal</keyword>
<keyword id="KW-0812">Transmembrane</keyword>
<keyword id="KW-1133">Transmembrane helix</keyword>
<name>DSG1_PIG</name>
<protein>
    <recommendedName>
        <fullName>Desmoglein-1</fullName>
    </recommendedName>
    <alternativeName>
        <fullName>Desmosomal glycoprotein 1</fullName>
        <shortName>DG1</shortName>
        <shortName>DGI</shortName>
    </alternativeName>
</protein>